<dbReference type="EMBL" id="M59940">
    <property type="protein sequence ID" value="AAA16289.1"/>
    <property type="molecule type" value="Unassigned_DNA"/>
</dbReference>
<dbReference type="EMBL" id="M59940">
    <property type="protein sequence ID" value="AAA16290.1"/>
    <property type="molecule type" value="Unassigned_DNA"/>
</dbReference>
<dbReference type="EMBL" id="FO080166">
    <property type="protein sequence ID" value="CCD61731.1"/>
    <property type="molecule type" value="Genomic_DNA"/>
</dbReference>
<dbReference type="EMBL" id="FO080166">
    <property type="protein sequence ID" value="CCD61732.1"/>
    <property type="molecule type" value="Genomic_DNA"/>
</dbReference>
<dbReference type="EMBL" id="FO080166">
    <property type="protein sequence ID" value="CCD61733.1"/>
    <property type="molecule type" value="Genomic_DNA"/>
</dbReference>
<dbReference type="PIR" id="A36289">
    <property type="entry name" value="A36289"/>
</dbReference>
<dbReference type="PIR" id="B36289">
    <property type="entry name" value="B36289"/>
</dbReference>
<dbReference type="RefSeq" id="NP_001021892.1">
    <molecule id="P22980-1"/>
    <property type="nucleotide sequence ID" value="NM_001026721.3"/>
</dbReference>
<dbReference type="RefSeq" id="NP_001021893.1">
    <molecule id="P22980-3"/>
    <property type="nucleotide sequence ID" value="NM_001026722.5"/>
</dbReference>
<dbReference type="RefSeq" id="NP_001367340.1">
    <molecule id="P22980-2"/>
    <property type="nucleotide sequence ID" value="NM_001381393.1"/>
</dbReference>
<dbReference type="RefSeq" id="NP_494798.4">
    <property type="nucleotide sequence ID" value="NM_062397.4"/>
</dbReference>
<dbReference type="SMR" id="P22980"/>
<dbReference type="BioGRID" id="39144">
    <property type="interactions" value="6"/>
</dbReference>
<dbReference type="FunCoup" id="P22980">
    <property type="interactions" value="124"/>
</dbReference>
<dbReference type="IntAct" id="P22980">
    <property type="interactions" value="2"/>
</dbReference>
<dbReference type="STRING" id="6239.B0304.1b.2"/>
<dbReference type="PaxDb" id="6239-B0304.1b"/>
<dbReference type="PeptideAtlas" id="P22980"/>
<dbReference type="EnsemblMetazoa" id="B0304.1a.1">
    <molecule id="P22980-2"/>
    <property type="protein sequence ID" value="B0304.1a.1"/>
    <property type="gene ID" value="WBGene00001948"/>
</dbReference>
<dbReference type="EnsemblMetazoa" id="B0304.1a.2">
    <molecule id="P22980-2"/>
    <property type="protein sequence ID" value="B0304.1a.2"/>
    <property type="gene ID" value="WBGene00001948"/>
</dbReference>
<dbReference type="EnsemblMetazoa" id="B0304.1b.1">
    <molecule id="P22980-1"/>
    <property type="protein sequence ID" value="B0304.1b.1"/>
    <property type="gene ID" value="WBGene00001948"/>
</dbReference>
<dbReference type="EnsemblMetazoa" id="B0304.1c.1">
    <molecule id="P22980-3"/>
    <property type="protein sequence ID" value="B0304.1c.1"/>
    <property type="gene ID" value="WBGene00001948"/>
</dbReference>
<dbReference type="GeneID" id="173788"/>
<dbReference type="KEGG" id="cel:CELE_B0304.1"/>
<dbReference type="UCSC" id="B0304.1a">
    <molecule id="P22980-1"/>
    <property type="organism name" value="c. elegans"/>
</dbReference>
<dbReference type="AGR" id="WB:WBGene00001948"/>
<dbReference type="CTD" id="173788"/>
<dbReference type="WormBase" id="B0304.1a">
    <molecule id="P22980-2"/>
    <property type="protein sequence ID" value="CE31766"/>
    <property type="gene ID" value="WBGene00001948"/>
    <property type="gene designation" value="hlh-1"/>
</dbReference>
<dbReference type="WormBase" id="B0304.1b">
    <molecule id="P22980-1"/>
    <property type="protein sequence ID" value="CE02423"/>
    <property type="gene ID" value="WBGene00001948"/>
    <property type="gene designation" value="hlh-1"/>
</dbReference>
<dbReference type="WormBase" id="B0304.1c">
    <molecule id="P22980-3"/>
    <property type="protein sequence ID" value="CE30067"/>
    <property type="gene ID" value="WBGene00001948"/>
    <property type="gene designation" value="hlh-1"/>
</dbReference>
<dbReference type="eggNOG" id="KOG3960">
    <property type="taxonomic scope" value="Eukaryota"/>
</dbReference>
<dbReference type="GeneTree" id="ENSGT00950000182959"/>
<dbReference type="InParanoid" id="P22980"/>
<dbReference type="OMA" id="IMEQNQH"/>
<dbReference type="OrthoDB" id="10049614at2759"/>
<dbReference type="Reactome" id="R-CEL-525793">
    <property type="pathway name" value="Myogenesis"/>
</dbReference>
<dbReference type="PRO" id="PR:P22980"/>
<dbReference type="Proteomes" id="UP000001940">
    <property type="component" value="Chromosome II"/>
</dbReference>
<dbReference type="Bgee" id="WBGene00001948">
    <property type="expression patterns" value="Expressed in embryonic cell and 98 other cell types or tissues"/>
</dbReference>
<dbReference type="GO" id="GO:0005634">
    <property type="term" value="C:nucleus"/>
    <property type="evidence" value="ECO:0000314"/>
    <property type="project" value="WormBase"/>
</dbReference>
<dbReference type="GO" id="GO:0003700">
    <property type="term" value="F:DNA-binding transcription factor activity"/>
    <property type="evidence" value="ECO:0000314"/>
    <property type="project" value="WormBase"/>
</dbReference>
<dbReference type="GO" id="GO:0000981">
    <property type="term" value="F:DNA-binding transcription factor activity, RNA polymerase II-specific"/>
    <property type="evidence" value="ECO:0000314"/>
    <property type="project" value="WormBase"/>
</dbReference>
<dbReference type="GO" id="GO:0042803">
    <property type="term" value="F:protein homodimerization activity"/>
    <property type="evidence" value="ECO:0000353"/>
    <property type="project" value="WormBase"/>
</dbReference>
<dbReference type="GO" id="GO:0000978">
    <property type="term" value="F:RNA polymerase II cis-regulatory region sequence-specific DNA binding"/>
    <property type="evidence" value="ECO:0000318"/>
    <property type="project" value="GO_Central"/>
</dbReference>
<dbReference type="GO" id="GO:0000977">
    <property type="term" value="F:RNA polymerase II transcription regulatory region sequence-specific DNA binding"/>
    <property type="evidence" value="ECO:0000314"/>
    <property type="project" value="WormBase"/>
</dbReference>
<dbReference type="GO" id="GO:0007517">
    <property type="term" value="P:muscle organ development"/>
    <property type="evidence" value="ECO:0007669"/>
    <property type="project" value="UniProtKB-KW"/>
</dbReference>
<dbReference type="GO" id="GO:0048337">
    <property type="term" value="P:positive regulation of mesodermal cell fate specification"/>
    <property type="evidence" value="ECO:0000316"/>
    <property type="project" value="UniProtKB"/>
</dbReference>
<dbReference type="GO" id="GO:0051149">
    <property type="term" value="P:positive regulation of muscle cell differentiation"/>
    <property type="evidence" value="ECO:0000316"/>
    <property type="project" value="UniProtKB"/>
</dbReference>
<dbReference type="GO" id="GO:0045663">
    <property type="term" value="P:positive regulation of myoblast differentiation"/>
    <property type="evidence" value="ECO:0000318"/>
    <property type="project" value="GO_Central"/>
</dbReference>
<dbReference type="GO" id="GO:0045944">
    <property type="term" value="P:positive regulation of transcription by RNA polymerase II"/>
    <property type="evidence" value="ECO:0000314"/>
    <property type="project" value="WormBase"/>
</dbReference>
<dbReference type="GO" id="GO:0006357">
    <property type="term" value="P:regulation of transcription by RNA polymerase II"/>
    <property type="evidence" value="ECO:0000314"/>
    <property type="project" value="WormBase"/>
</dbReference>
<dbReference type="GO" id="GO:0051146">
    <property type="term" value="P:striated muscle cell differentiation"/>
    <property type="evidence" value="ECO:0000315"/>
    <property type="project" value="WormBase"/>
</dbReference>
<dbReference type="CDD" id="cd19699">
    <property type="entry name" value="bHLH_TS_dMYOD_like"/>
    <property type="match status" value="1"/>
</dbReference>
<dbReference type="FunFam" id="4.10.280.10:FF:000005">
    <property type="entry name" value="Myogenic factor"/>
    <property type="match status" value="1"/>
</dbReference>
<dbReference type="Gene3D" id="4.10.280.10">
    <property type="entry name" value="Helix-loop-helix DNA-binding domain"/>
    <property type="match status" value="1"/>
</dbReference>
<dbReference type="InterPro" id="IPR011598">
    <property type="entry name" value="bHLH_dom"/>
</dbReference>
<dbReference type="InterPro" id="IPR036638">
    <property type="entry name" value="HLH_DNA-bd_sf"/>
</dbReference>
<dbReference type="InterPro" id="IPR039704">
    <property type="entry name" value="Myogenic_factor"/>
</dbReference>
<dbReference type="PANTHER" id="PTHR11534">
    <property type="entry name" value="MYOGENIC FACTOR"/>
    <property type="match status" value="1"/>
</dbReference>
<dbReference type="PANTHER" id="PTHR11534:SF9">
    <property type="entry name" value="MYOGENIC-DETERMINATION PROTEIN"/>
    <property type="match status" value="1"/>
</dbReference>
<dbReference type="Pfam" id="PF00010">
    <property type="entry name" value="HLH"/>
    <property type="match status" value="1"/>
</dbReference>
<dbReference type="SMART" id="SM00353">
    <property type="entry name" value="HLH"/>
    <property type="match status" value="1"/>
</dbReference>
<dbReference type="SUPFAM" id="SSF47459">
    <property type="entry name" value="HLH, helix-loop-helix DNA-binding domain"/>
    <property type="match status" value="1"/>
</dbReference>
<dbReference type="PROSITE" id="PS50888">
    <property type="entry name" value="BHLH"/>
    <property type="match status" value="1"/>
</dbReference>
<comment type="function">
    <text evidence="3 4 5 6">Involved in myogenesis, in cooperation with transcription factors unc-120 and hnd-1 (PubMed:15892873, PubMed:17142668, PubMed:2175254). Acts redundantly with fozi-1 to promote body wall muscle cell and coelomocyte specification in postembryonic mesoderm progenitors, probably through suppression of sem-2 (PubMed:21307099).</text>
</comment>
<comment type="subunit">
    <text>Efficient DNA binding requires dimerization with another bHLH protein.</text>
</comment>
<comment type="subcellular location">
    <subcellularLocation>
        <location evidence="6">Nucleus</location>
    </subcellularLocation>
</comment>
<comment type="alternative products">
    <event type="alternative splicing"/>
    <isoform>
        <id>P22980-1</id>
        <name evidence="11">b</name>
        <sequence type="displayed"/>
    </isoform>
    <isoform>
        <id>P22980-2</id>
        <name evidence="10">a</name>
        <sequence type="described" ref="VSP_002142"/>
    </isoform>
    <isoform>
        <id>P22980-3</id>
        <name evidence="12">c</name>
        <sequence type="described" ref="VSP_002143"/>
    </isoform>
</comment>
<comment type="tissue specificity">
    <text>Body wall muscle cells; in clonal muscle precursors, in a set of early embryonic blastomeres (the ms-granddaughters), and in six glial-like cells called GLRS.</text>
</comment>
<comment type="disruption phenotype">
    <text evidence="3 5">RNAi-mediated knockdown results in a low frequency of embryonic lethality, with embryos arresting paralyzed at the two-fold stage; increases in frequency significantly on an hnd-1 or unc-120 mutant background (PubMed:15892873). Many embryos that survive to hatch become uncoordinated, dumpy larvae (PubMed:15892873). Double RNAi-mediated knockdown with sem-2 results in no sex myoblast production (PubMed:21307099).</text>
</comment>
<feature type="chain" id="PRO_0000127373" description="Myoblast determination protein 1 homolog">
    <location>
        <begin position="1"/>
        <end position="324"/>
    </location>
</feature>
<feature type="domain" description="bHLH" evidence="1">
    <location>
        <begin position="155"/>
        <end position="206"/>
    </location>
</feature>
<feature type="region of interest" description="Disordered" evidence="2">
    <location>
        <begin position="125"/>
        <end position="146"/>
    </location>
</feature>
<feature type="region of interest" description="Disordered" evidence="2">
    <location>
        <begin position="251"/>
        <end position="272"/>
    </location>
</feature>
<feature type="compositionally biased region" description="Acidic residues" evidence="2">
    <location>
        <begin position="256"/>
        <end position="267"/>
    </location>
</feature>
<feature type="splice variant" id="VSP_002142" description="In isoform a." evidence="7">
    <original>FVLSV</original>
    <variation>L</variation>
    <location>
        <begin position="150"/>
        <end position="154"/>
    </location>
</feature>
<feature type="splice variant" id="VSP_002143" description="In isoform c." evidence="8">
    <original>AVDLRRRNSLDRLSRIVASIPNEEAMTDEQLLQPANDVIDGEKKLEML</original>
    <variation>GELLLKTNGRSASAKLFGQIVADRCEHSQRGSNDRRTTPPTSK</variation>
    <location>
        <begin position="277"/>
        <end position="324"/>
    </location>
</feature>
<feature type="mutagenesis site" description="In cc561; low frequency of embryonic lethality, with embryos arresting paralyzed at the two-fold stage (Pat); increases in frequency significantly on an hnd-1 or unc-120 mutant background. Many embryos that survive to hatch become uncoordinated, dumpy larvae." evidence="3">
    <location>
        <begin position="222"/>
        <end position="324"/>
    </location>
</feature>
<name>MYOD1_CAEEL</name>
<proteinExistence type="evidence at protein level"/>
<sequence length="324" mass="36449">MNTETSTQSAPSDTYDTSIYYNSSPRVTANDITTLTSFAAPAPQVLDYANTQYDIYRNQPAYYLPSYAPTAPTTFYSDFANFNVTRSQDFASVPAVANSSDVKPIIIKQEKSTPNATELIIQSRVDSQHEDTTTSTAGGAGVGGPRRTKFVLSVDRRKAATMRERRRLRKVNEAFEVVKQRTCPNPNQRLPKVEILRSAIDYINNLERMLQQAGKMTKIMEQNQHLQMTQQINGAPPHDYVTSSHFASSSYNPENMFDDDDLTDSDDDRDHHKLGNAVDLRRRNSLDRLSRIVASIPNEEAMTDEQLLQPANDVIDGEKKLEML</sequence>
<accession>P22980</accession>
<organism evidence="9">
    <name type="scientific">Caenorhabditis elegans</name>
    <dbReference type="NCBI Taxonomy" id="6239"/>
    <lineage>
        <taxon>Eukaryota</taxon>
        <taxon>Metazoa</taxon>
        <taxon>Ecdysozoa</taxon>
        <taxon>Nematoda</taxon>
        <taxon>Chromadorea</taxon>
        <taxon>Rhabditida</taxon>
        <taxon>Rhabditina</taxon>
        <taxon>Rhabditomorpha</taxon>
        <taxon>Rhabditoidea</taxon>
        <taxon>Rhabditidae</taxon>
        <taxon>Peloderinae</taxon>
        <taxon>Caenorhabditis</taxon>
    </lineage>
</organism>
<evidence type="ECO:0000255" key="1">
    <source>
        <dbReference type="PROSITE-ProRule" id="PRU00981"/>
    </source>
</evidence>
<evidence type="ECO:0000256" key="2">
    <source>
        <dbReference type="SAM" id="MobiDB-lite"/>
    </source>
</evidence>
<evidence type="ECO:0000269" key="3">
    <source>
    </source>
</evidence>
<evidence type="ECO:0000269" key="4">
    <source>
    </source>
</evidence>
<evidence type="ECO:0000269" key="5">
    <source>
    </source>
</evidence>
<evidence type="ECO:0000269" key="6">
    <source>
    </source>
</evidence>
<evidence type="ECO:0000303" key="7">
    <source>
    </source>
</evidence>
<evidence type="ECO:0000305" key="8"/>
<evidence type="ECO:0000312" key="9">
    <source>
        <dbReference type="Proteomes" id="UP000001940"/>
    </source>
</evidence>
<evidence type="ECO:0000312" key="10">
    <source>
        <dbReference type="WormBase" id="B0304.1a"/>
    </source>
</evidence>
<evidence type="ECO:0000312" key="11">
    <source>
        <dbReference type="WormBase" id="B0304.1b"/>
    </source>
</evidence>
<evidence type="ECO:0000312" key="12">
    <source>
        <dbReference type="WormBase" id="B0304.1c"/>
    </source>
</evidence>
<reference key="1">
    <citation type="journal article" date="1990" name="Cell">
        <title>CeMyoD accumulation defines the body wall muscle cell fate during C. elegans embryogenesis.</title>
        <authorList>
            <person name="Krause M."/>
            <person name="Fire A."/>
            <person name="Harrison S.W."/>
            <person name="Priess J."/>
            <person name="Weintraub H."/>
        </authorList>
    </citation>
    <scope>NUCLEOTIDE SEQUENCE [MRNA] (ISOFORMS A AND B)</scope>
    <scope>FUNCTION</scope>
    <scope>SUBCELLULAR LOCATION</scope>
</reference>
<reference key="2">
    <citation type="journal article" date="1998" name="Science">
        <title>Genome sequence of the nematode C. elegans: a platform for investigating biology.</title>
        <authorList>
            <consortium name="The C. elegans sequencing consortium"/>
        </authorList>
    </citation>
    <scope>NUCLEOTIDE SEQUENCE [LARGE SCALE GENOMIC DNA]</scope>
    <scope>ALTERNATIVE SPLICING</scope>
    <source>
        <strain evidence="9">Bristol N2</strain>
    </source>
</reference>
<reference evidence="8" key="3">
    <citation type="journal article" date="2005" name="Genome Biol.">
        <title>Synthetic lethal analysis of Caenorhabditis elegans posterior embryonic patterning genes identifies conserved genetic interactions.</title>
        <authorList>
            <person name="Baugh L.R."/>
            <person name="Wen J.C."/>
            <person name="Hill A.A."/>
            <person name="Slonim D.K."/>
            <person name="Brown E.L."/>
            <person name="Hunter C.P."/>
        </authorList>
    </citation>
    <scope>FUNCTION</scope>
    <scope>DISRUPTION PHENOTYPE</scope>
    <scope>MUTAGENESIS OF 222-GLN--LEU-324</scope>
</reference>
<reference evidence="8" key="4">
    <citation type="journal article" date="2006" name="Genes Dev.">
        <title>Defining the transcriptional redundancy of early bodywall muscle development in C. elegans: evidence for a unified theory of animal muscle development.</title>
        <authorList>
            <person name="Fukushige T."/>
            <person name="Brodigan T.M."/>
            <person name="Schriefer L.A."/>
            <person name="Waterston R.H."/>
            <person name="Krause M."/>
        </authorList>
    </citation>
    <scope>FUNCTION</scope>
</reference>
<reference key="5">
    <citation type="journal article" date="2011" name="Development">
        <title>The C. elegans SoxC protein SEM-2 opposes differentiation factors to promote a proliferative blast cell fate in the postembryonic mesoderm.</title>
        <authorList>
            <person name="Tian C."/>
            <person name="Shi H."/>
            <person name="Colledge C."/>
            <person name="Stern M."/>
            <person name="Waterston R."/>
            <person name="Liu J."/>
        </authorList>
    </citation>
    <scope>FUNCTION</scope>
    <scope>DISRUPTION PHENOTYPE</scope>
</reference>
<protein>
    <recommendedName>
        <fullName>Myoblast determination protein 1 homolog</fullName>
        <shortName>MyoD protein 1</shortName>
    </recommendedName>
    <alternativeName>
        <fullName>Helix-loop-helix protein 1</fullName>
    </alternativeName>
</protein>
<gene>
    <name evidence="11" type="primary">hlh-1</name>
    <name evidence="11" type="ORF">B0304.1</name>
</gene>
<keyword id="KW-0025">Alternative splicing</keyword>
<keyword id="KW-0217">Developmental protein</keyword>
<keyword id="KW-0221">Differentiation</keyword>
<keyword id="KW-0238">DNA-binding</keyword>
<keyword id="KW-0517">Myogenesis</keyword>
<keyword id="KW-0539">Nucleus</keyword>
<keyword id="KW-1185">Reference proteome</keyword>
<keyword id="KW-0804">Transcription</keyword>
<keyword id="KW-0805">Transcription regulation</keyword>